<proteinExistence type="evidence at protein level"/>
<name>PCP_MOUSE</name>
<feature type="signal peptide" evidence="2">
    <location>
        <begin position="1"/>
        <end position="17"/>
    </location>
</feature>
<feature type="propeptide" id="PRO_0000027310" evidence="1">
    <location>
        <begin position="18"/>
        <end position="43"/>
    </location>
</feature>
<feature type="chain" id="PRO_0000027311" description="Lysosomal Pro-X carboxypeptidase">
    <location>
        <begin position="44"/>
        <end position="491"/>
    </location>
</feature>
<feature type="region of interest" description="SKS domain" evidence="1">
    <location>
        <begin position="192"/>
        <end position="332"/>
    </location>
</feature>
<feature type="active site" description="Charge relay system" evidence="2">
    <location>
        <position position="177"/>
    </location>
</feature>
<feature type="active site" description="Charge relay system" evidence="2">
    <location>
        <position position="428"/>
    </location>
</feature>
<feature type="active site" description="Charge relay system" evidence="2">
    <location>
        <position position="453"/>
    </location>
</feature>
<feature type="glycosylation site" description="N-linked (GlcNAc...) asparagine" evidence="2">
    <location>
        <position position="99"/>
    </location>
</feature>
<feature type="glycosylation site" description="N-linked (GlcNAc...) asparagine" evidence="2">
    <location>
        <position position="315"/>
    </location>
</feature>
<feature type="glycosylation site" description="N-linked (GlcNAc...) asparagine" evidence="2">
    <location>
        <position position="334"/>
    </location>
</feature>
<feature type="glycosylation site" description="N-linked (GlcNAc...) asparagine" evidence="2">
    <location>
        <position position="343"/>
    </location>
</feature>
<feature type="glycosylation site" description="N-linked (GlcNAc...) asparagine" evidence="2">
    <location>
        <position position="413"/>
    </location>
</feature>
<feature type="disulfide bond" evidence="1">
    <location>
        <begin position="213"/>
        <end position="370"/>
    </location>
</feature>
<feature type="disulfide bond" evidence="1">
    <location>
        <begin position="231"/>
        <end position="308"/>
    </location>
</feature>
<feature type="disulfide bond" evidence="1">
    <location>
        <begin position="262"/>
        <end position="341"/>
    </location>
</feature>
<feature type="disulfide bond" evidence="1">
    <location>
        <begin position="362"/>
        <end position="392"/>
    </location>
</feature>
<feature type="splice variant" id="VSP_039456" description="In isoform 2." evidence="3">
    <original>GFMWDVAEELKAMLVFAEHRYYGESLPFGQDSFKDSQHLNFLTSEQALADFAELIRHLEKTIPGAQGQPVIAIGGSYGGMLAAWFRMKYPHIVVGALAASAPIWQLDGMVPCGEFMKIVTNDFRKSGPYCSESIRKSWNVIDKLSGSGSGLQSLTNILHLCSPLTSEKIPTLKGWIAETWVNLAMVNYPYACNFLQPLPAWPIKEVCQYLKNPNVSDTVLLQNIFQALSVYYNYSGQAACLNISQTTTSSLGSMGWSFQACTEMVMPFCTNGIDDMFEPFLWDLEKYSNDCFNQWGVKPRPHWMTTMYGGKNISSHSNIIFSNGELDPWSGGGVTRDITDTLVAINIHDGAHHLDLRAHNAFDPSSVLLSRLLEVKHMKKWILDFYSNIQ</original>
    <variation>VCIH</variation>
    <location>
        <begin position="102"/>
        <end position="491"/>
    </location>
</feature>
<feature type="sequence conflict" description="In Ref. 1; BAE38679 and 2; AAH55022." evidence="4" ref="1 2">
    <original>E</original>
    <variation>K</variation>
    <location>
        <position position="426"/>
    </location>
</feature>
<feature type="sequence conflict" description="In Ref. 1; BAE38679 and 2; AAH55022." evidence="4" ref="1 2">
    <original>H</original>
    <variation>P</variation>
    <location>
        <position position="449"/>
    </location>
</feature>
<keyword id="KW-0025">Alternative splicing</keyword>
<keyword id="KW-0121">Carboxypeptidase</keyword>
<keyword id="KW-1015">Disulfide bond</keyword>
<keyword id="KW-0325">Glycoprotein</keyword>
<keyword id="KW-0378">Hydrolase</keyword>
<keyword id="KW-0458">Lysosome</keyword>
<keyword id="KW-0645">Protease</keyword>
<keyword id="KW-1185">Reference proteome</keyword>
<keyword id="KW-0732">Signal</keyword>
<keyword id="KW-0865">Zymogen</keyword>
<organism>
    <name type="scientific">Mus musculus</name>
    <name type="common">Mouse</name>
    <dbReference type="NCBI Taxonomy" id="10090"/>
    <lineage>
        <taxon>Eukaryota</taxon>
        <taxon>Metazoa</taxon>
        <taxon>Chordata</taxon>
        <taxon>Craniata</taxon>
        <taxon>Vertebrata</taxon>
        <taxon>Euteleostomi</taxon>
        <taxon>Mammalia</taxon>
        <taxon>Eutheria</taxon>
        <taxon>Euarchontoglires</taxon>
        <taxon>Glires</taxon>
        <taxon>Rodentia</taxon>
        <taxon>Myomorpha</taxon>
        <taxon>Muroidea</taxon>
        <taxon>Muridae</taxon>
        <taxon>Murinae</taxon>
        <taxon>Mus</taxon>
        <taxon>Mus</taxon>
    </lineage>
</organism>
<reference key="1">
    <citation type="journal article" date="2005" name="Science">
        <title>The transcriptional landscape of the mammalian genome.</title>
        <authorList>
            <person name="Carninci P."/>
            <person name="Kasukawa T."/>
            <person name="Katayama S."/>
            <person name="Gough J."/>
            <person name="Frith M.C."/>
            <person name="Maeda N."/>
            <person name="Oyama R."/>
            <person name="Ravasi T."/>
            <person name="Lenhard B."/>
            <person name="Wells C."/>
            <person name="Kodzius R."/>
            <person name="Shimokawa K."/>
            <person name="Bajic V.B."/>
            <person name="Brenner S.E."/>
            <person name="Batalov S."/>
            <person name="Forrest A.R."/>
            <person name="Zavolan M."/>
            <person name="Davis M.J."/>
            <person name="Wilming L.G."/>
            <person name="Aidinis V."/>
            <person name="Allen J.E."/>
            <person name="Ambesi-Impiombato A."/>
            <person name="Apweiler R."/>
            <person name="Aturaliya R.N."/>
            <person name="Bailey T.L."/>
            <person name="Bansal M."/>
            <person name="Baxter L."/>
            <person name="Beisel K.W."/>
            <person name="Bersano T."/>
            <person name="Bono H."/>
            <person name="Chalk A.M."/>
            <person name="Chiu K.P."/>
            <person name="Choudhary V."/>
            <person name="Christoffels A."/>
            <person name="Clutterbuck D.R."/>
            <person name="Crowe M.L."/>
            <person name="Dalla E."/>
            <person name="Dalrymple B.P."/>
            <person name="de Bono B."/>
            <person name="Della Gatta G."/>
            <person name="di Bernardo D."/>
            <person name="Down T."/>
            <person name="Engstrom P."/>
            <person name="Fagiolini M."/>
            <person name="Faulkner G."/>
            <person name="Fletcher C.F."/>
            <person name="Fukushima T."/>
            <person name="Furuno M."/>
            <person name="Futaki S."/>
            <person name="Gariboldi M."/>
            <person name="Georgii-Hemming P."/>
            <person name="Gingeras T.R."/>
            <person name="Gojobori T."/>
            <person name="Green R.E."/>
            <person name="Gustincich S."/>
            <person name="Harbers M."/>
            <person name="Hayashi Y."/>
            <person name="Hensch T.K."/>
            <person name="Hirokawa N."/>
            <person name="Hill D."/>
            <person name="Huminiecki L."/>
            <person name="Iacono M."/>
            <person name="Ikeo K."/>
            <person name="Iwama A."/>
            <person name="Ishikawa T."/>
            <person name="Jakt M."/>
            <person name="Kanapin A."/>
            <person name="Katoh M."/>
            <person name="Kawasawa Y."/>
            <person name="Kelso J."/>
            <person name="Kitamura H."/>
            <person name="Kitano H."/>
            <person name="Kollias G."/>
            <person name="Krishnan S.P."/>
            <person name="Kruger A."/>
            <person name="Kummerfeld S.K."/>
            <person name="Kurochkin I.V."/>
            <person name="Lareau L.F."/>
            <person name="Lazarevic D."/>
            <person name="Lipovich L."/>
            <person name="Liu J."/>
            <person name="Liuni S."/>
            <person name="McWilliam S."/>
            <person name="Madan Babu M."/>
            <person name="Madera M."/>
            <person name="Marchionni L."/>
            <person name="Matsuda H."/>
            <person name="Matsuzawa S."/>
            <person name="Miki H."/>
            <person name="Mignone F."/>
            <person name="Miyake S."/>
            <person name="Morris K."/>
            <person name="Mottagui-Tabar S."/>
            <person name="Mulder N."/>
            <person name="Nakano N."/>
            <person name="Nakauchi H."/>
            <person name="Ng P."/>
            <person name="Nilsson R."/>
            <person name="Nishiguchi S."/>
            <person name="Nishikawa S."/>
            <person name="Nori F."/>
            <person name="Ohara O."/>
            <person name="Okazaki Y."/>
            <person name="Orlando V."/>
            <person name="Pang K.C."/>
            <person name="Pavan W.J."/>
            <person name="Pavesi G."/>
            <person name="Pesole G."/>
            <person name="Petrovsky N."/>
            <person name="Piazza S."/>
            <person name="Reed J."/>
            <person name="Reid J.F."/>
            <person name="Ring B.Z."/>
            <person name="Ringwald M."/>
            <person name="Rost B."/>
            <person name="Ruan Y."/>
            <person name="Salzberg S.L."/>
            <person name="Sandelin A."/>
            <person name="Schneider C."/>
            <person name="Schoenbach C."/>
            <person name="Sekiguchi K."/>
            <person name="Semple C.A."/>
            <person name="Seno S."/>
            <person name="Sessa L."/>
            <person name="Sheng Y."/>
            <person name="Shibata Y."/>
            <person name="Shimada H."/>
            <person name="Shimada K."/>
            <person name="Silva D."/>
            <person name="Sinclair B."/>
            <person name="Sperling S."/>
            <person name="Stupka E."/>
            <person name="Sugiura K."/>
            <person name="Sultana R."/>
            <person name="Takenaka Y."/>
            <person name="Taki K."/>
            <person name="Tammoja K."/>
            <person name="Tan S.L."/>
            <person name="Tang S."/>
            <person name="Taylor M.S."/>
            <person name="Tegner J."/>
            <person name="Teichmann S.A."/>
            <person name="Ueda H.R."/>
            <person name="van Nimwegen E."/>
            <person name="Verardo R."/>
            <person name="Wei C.L."/>
            <person name="Yagi K."/>
            <person name="Yamanishi H."/>
            <person name="Zabarovsky E."/>
            <person name="Zhu S."/>
            <person name="Zimmer A."/>
            <person name="Hide W."/>
            <person name="Bult C."/>
            <person name="Grimmond S.M."/>
            <person name="Teasdale R.D."/>
            <person name="Liu E.T."/>
            <person name="Brusic V."/>
            <person name="Quackenbush J."/>
            <person name="Wahlestedt C."/>
            <person name="Mattick J.S."/>
            <person name="Hume D.A."/>
            <person name="Kai C."/>
            <person name="Sasaki D."/>
            <person name="Tomaru Y."/>
            <person name="Fukuda S."/>
            <person name="Kanamori-Katayama M."/>
            <person name="Suzuki M."/>
            <person name="Aoki J."/>
            <person name="Arakawa T."/>
            <person name="Iida J."/>
            <person name="Imamura K."/>
            <person name="Itoh M."/>
            <person name="Kato T."/>
            <person name="Kawaji H."/>
            <person name="Kawagashira N."/>
            <person name="Kawashima T."/>
            <person name="Kojima M."/>
            <person name="Kondo S."/>
            <person name="Konno H."/>
            <person name="Nakano K."/>
            <person name="Ninomiya N."/>
            <person name="Nishio T."/>
            <person name="Okada M."/>
            <person name="Plessy C."/>
            <person name="Shibata K."/>
            <person name="Shiraki T."/>
            <person name="Suzuki S."/>
            <person name="Tagami M."/>
            <person name="Waki K."/>
            <person name="Watahiki A."/>
            <person name="Okamura-Oho Y."/>
            <person name="Suzuki H."/>
            <person name="Kawai J."/>
            <person name="Hayashizaki Y."/>
        </authorList>
    </citation>
    <scope>NUCLEOTIDE SEQUENCE [LARGE SCALE MRNA] (ISOFORMS 1 AND 2)</scope>
    <source>
        <strain>C57BL/6J</strain>
        <tissue>Mammary gland</tissue>
        <tissue>Ovary</tissue>
        <tissue>Spinal ganglion</tissue>
    </source>
</reference>
<reference key="2">
    <citation type="journal article" date="2004" name="Genome Res.">
        <title>The status, quality, and expansion of the NIH full-length cDNA project: the Mammalian Gene Collection (MGC).</title>
        <authorList>
            <consortium name="The MGC Project Team"/>
        </authorList>
    </citation>
    <scope>NUCLEOTIDE SEQUENCE [LARGE SCALE MRNA] (ISOFORM 1)</scope>
    <source>
        <strain>Czech II</strain>
        <strain>FVB/N</strain>
        <tissue>Kidney</tissue>
        <tissue>Mammary tumor</tissue>
    </source>
</reference>
<reference key="3">
    <citation type="journal article" date="2010" name="Cell">
        <title>A tissue-specific atlas of mouse protein phosphorylation and expression.</title>
        <authorList>
            <person name="Huttlin E.L."/>
            <person name="Jedrychowski M.P."/>
            <person name="Elias J.E."/>
            <person name="Goswami T."/>
            <person name="Rad R."/>
            <person name="Beausoleil S.A."/>
            <person name="Villen J."/>
            <person name="Haas W."/>
            <person name="Sowa M.E."/>
            <person name="Gygi S.P."/>
        </authorList>
    </citation>
    <scope>IDENTIFICATION BY MASS SPECTROMETRY [LARGE SCALE ANALYSIS]</scope>
    <source>
        <tissue>Kidney</tissue>
        <tissue>Liver</tissue>
        <tissue>Lung</tissue>
        <tissue>Spleen</tissue>
        <tissue>Testis</tissue>
    </source>
</reference>
<dbReference type="EC" id="3.4.16.2"/>
<dbReference type="EMBL" id="AK011816">
    <property type="protein sequence ID" value="BAB27858.1"/>
    <property type="molecule type" value="mRNA"/>
</dbReference>
<dbReference type="EMBL" id="AK051677">
    <property type="protein sequence ID" value="BAC34716.1"/>
    <property type="molecule type" value="mRNA"/>
</dbReference>
<dbReference type="EMBL" id="AK054462">
    <property type="protein sequence ID" value="BAE20697.1"/>
    <property type="molecule type" value="mRNA"/>
</dbReference>
<dbReference type="EMBL" id="AK166282">
    <property type="protein sequence ID" value="BAE38679.1"/>
    <property type="molecule type" value="mRNA"/>
</dbReference>
<dbReference type="EMBL" id="BC026424">
    <property type="protein sequence ID" value="AAH26424.1"/>
    <property type="molecule type" value="mRNA"/>
</dbReference>
<dbReference type="EMBL" id="BC055022">
    <property type="protein sequence ID" value="AAH55022.1"/>
    <property type="molecule type" value="mRNA"/>
</dbReference>
<dbReference type="CCDS" id="CCDS21452.1">
    <molecule id="Q7TMR0-1"/>
</dbReference>
<dbReference type="RefSeq" id="NP_082519.1">
    <molecule id="Q7TMR0-1"/>
    <property type="nucleotide sequence ID" value="NM_028243.3"/>
</dbReference>
<dbReference type="SMR" id="Q7TMR0"/>
<dbReference type="BioGRID" id="215382">
    <property type="interactions" value="8"/>
</dbReference>
<dbReference type="FunCoup" id="Q7TMR0">
    <property type="interactions" value="1867"/>
</dbReference>
<dbReference type="STRING" id="10090.ENSMUSP00000075429"/>
<dbReference type="BindingDB" id="Q7TMR0"/>
<dbReference type="ChEMBL" id="CHEMBL1255149"/>
<dbReference type="ESTHER" id="mouse-pcp">
    <property type="family name" value="Prolylcarboxypeptidase"/>
</dbReference>
<dbReference type="MEROPS" id="S28.001"/>
<dbReference type="GlyCosmos" id="Q7TMR0">
    <property type="glycosylation" value="5 sites, No reported glycans"/>
</dbReference>
<dbReference type="GlyGen" id="Q7TMR0">
    <property type="glycosylation" value="6 sites, 1 N-linked glycan (1 site)"/>
</dbReference>
<dbReference type="PhosphoSitePlus" id="Q7TMR0"/>
<dbReference type="SwissPalm" id="Q7TMR0"/>
<dbReference type="jPOST" id="Q7TMR0"/>
<dbReference type="PaxDb" id="10090-ENSMUSP00000075429"/>
<dbReference type="PeptideAtlas" id="Q7TMR0"/>
<dbReference type="ProteomicsDB" id="287967">
    <molecule id="Q7TMR0-1"/>
</dbReference>
<dbReference type="ProteomicsDB" id="287968">
    <molecule id="Q7TMR0-2"/>
</dbReference>
<dbReference type="Pumba" id="Q7TMR0"/>
<dbReference type="Antibodypedia" id="2472">
    <property type="antibodies" value="241 antibodies from 27 providers"/>
</dbReference>
<dbReference type="DNASU" id="72461"/>
<dbReference type="Ensembl" id="ENSMUST00000076052.8">
    <molecule id="Q7TMR0-1"/>
    <property type="protein sequence ID" value="ENSMUSP00000075429.7"/>
    <property type="gene ID" value="ENSMUSG00000061119.8"/>
</dbReference>
<dbReference type="GeneID" id="72461"/>
<dbReference type="KEGG" id="mmu:72461"/>
<dbReference type="UCSC" id="uc009iij.2">
    <molecule id="Q7TMR0-2"/>
    <property type="organism name" value="mouse"/>
</dbReference>
<dbReference type="UCSC" id="uc009iik.2">
    <molecule id="Q7TMR0-1"/>
    <property type="organism name" value="mouse"/>
</dbReference>
<dbReference type="AGR" id="MGI:1919711"/>
<dbReference type="CTD" id="5547"/>
<dbReference type="MGI" id="MGI:1919711">
    <property type="gene designation" value="Prcp"/>
</dbReference>
<dbReference type="VEuPathDB" id="HostDB:ENSMUSG00000061119"/>
<dbReference type="eggNOG" id="KOG2183">
    <property type="taxonomic scope" value="Eukaryota"/>
</dbReference>
<dbReference type="GeneTree" id="ENSGT00940000158099"/>
<dbReference type="HOGENOM" id="CLU_020959_0_0_1"/>
<dbReference type="InParanoid" id="Q7TMR0"/>
<dbReference type="OMA" id="ESENCYR"/>
<dbReference type="OrthoDB" id="55866at9989"/>
<dbReference type="PhylomeDB" id="Q7TMR0"/>
<dbReference type="TreeFam" id="TF314414"/>
<dbReference type="BRENDA" id="3.4.16.2">
    <property type="organism ID" value="3474"/>
</dbReference>
<dbReference type="Reactome" id="R-MMU-140837">
    <property type="pathway name" value="Intrinsic Pathway of Fibrin Clot Formation"/>
</dbReference>
<dbReference type="Reactome" id="R-MMU-6798695">
    <property type="pathway name" value="Neutrophil degranulation"/>
</dbReference>
<dbReference type="BioGRID-ORCS" id="72461">
    <property type="hits" value="3 hits in 78 CRISPR screens"/>
</dbReference>
<dbReference type="ChiTaRS" id="Prcp">
    <property type="organism name" value="mouse"/>
</dbReference>
<dbReference type="PRO" id="PR:Q7TMR0"/>
<dbReference type="Proteomes" id="UP000000589">
    <property type="component" value="Chromosome 7"/>
</dbReference>
<dbReference type="RNAct" id="Q7TMR0">
    <property type="molecule type" value="protein"/>
</dbReference>
<dbReference type="Bgee" id="ENSMUSG00000061119">
    <property type="expression patterns" value="Expressed in undifferentiated genital tubercle and 200 other cell types or tissues"/>
</dbReference>
<dbReference type="ExpressionAtlas" id="Q7TMR0">
    <property type="expression patterns" value="baseline and differential"/>
</dbReference>
<dbReference type="GO" id="GO:0045178">
    <property type="term" value="C:basal part of cell"/>
    <property type="evidence" value="ECO:0000314"/>
    <property type="project" value="MGI"/>
</dbReference>
<dbReference type="GO" id="GO:0005576">
    <property type="term" value="C:extracellular region"/>
    <property type="evidence" value="ECO:0000314"/>
    <property type="project" value="MGI"/>
</dbReference>
<dbReference type="GO" id="GO:0005764">
    <property type="term" value="C:lysosome"/>
    <property type="evidence" value="ECO:0000314"/>
    <property type="project" value="MGI"/>
</dbReference>
<dbReference type="GO" id="GO:0004181">
    <property type="term" value="F:metallocarboxypeptidase activity"/>
    <property type="evidence" value="ECO:0000315"/>
    <property type="project" value="MGI"/>
</dbReference>
<dbReference type="GO" id="GO:0004185">
    <property type="term" value="F:serine-type carboxypeptidase activity"/>
    <property type="evidence" value="ECO:0007669"/>
    <property type="project" value="UniProtKB-EC"/>
</dbReference>
<dbReference type="GO" id="GO:0060055">
    <property type="term" value="P:angiogenesis involved in wound healing"/>
    <property type="evidence" value="ECO:0000315"/>
    <property type="project" value="MGI"/>
</dbReference>
<dbReference type="GO" id="GO:0002003">
    <property type="term" value="P:angiotensin maturation"/>
    <property type="evidence" value="ECO:0000315"/>
    <property type="project" value="MGI"/>
</dbReference>
<dbReference type="GO" id="GO:0097009">
    <property type="term" value="P:energy homeostasis"/>
    <property type="evidence" value="ECO:0000315"/>
    <property type="project" value="MGI"/>
</dbReference>
<dbReference type="GO" id="GO:0042593">
    <property type="term" value="P:glucose homeostasis"/>
    <property type="evidence" value="ECO:0000315"/>
    <property type="project" value="MGI"/>
</dbReference>
<dbReference type="GO" id="GO:0003085">
    <property type="term" value="P:negative regulation of systemic arterial blood pressure"/>
    <property type="evidence" value="ECO:0000315"/>
    <property type="project" value="MGI"/>
</dbReference>
<dbReference type="GO" id="GO:0002353">
    <property type="term" value="P:plasma kallikrein-kinin cascade"/>
    <property type="evidence" value="ECO:0000315"/>
    <property type="project" value="MGI"/>
</dbReference>
<dbReference type="GO" id="GO:0043535">
    <property type="term" value="P:regulation of blood vessel endothelial cell migration"/>
    <property type="evidence" value="ECO:0000315"/>
    <property type="project" value="MGI"/>
</dbReference>
<dbReference type="GO" id="GO:2000377">
    <property type="term" value="P:regulation of reactive oxygen species metabolic process"/>
    <property type="evidence" value="ECO:0000315"/>
    <property type="project" value="MGI"/>
</dbReference>
<dbReference type="GO" id="GO:0002155">
    <property type="term" value="P:regulation of thyroid hormone receptor signaling pathway"/>
    <property type="evidence" value="ECO:0000315"/>
    <property type="project" value="MGI"/>
</dbReference>
<dbReference type="FunFam" id="1.20.120.980:FF:000002">
    <property type="entry name" value="lysosomal Pro-X carboxypeptidase"/>
    <property type="match status" value="1"/>
</dbReference>
<dbReference type="Gene3D" id="3.40.50.1820">
    <property type="entry name" value="alpha/beta hydrolase"/>
    <property type="match status" value="1"/>
</dbReference>
<dbReference type="Gene3D" id="1.20.120.980">
    <property type="entry name" value="Serine carboxypeptidase S28, SKS domain"/>
    <property type="match status" value="1"/>
</dbReference>
<dbReference type="InterPro" id="IPR029058">
    <property type="entry name" value="AB_hydrolase_fold"/>
</dbReference>
<dbReference type="InterPro" id="IPR008758">
    <property type="entry name" value="Peptidase_S28"/>
</dbReference>
<dbReference type="InterPro" id="IPR042269">
    <property type="entry name" value="Ser_carbopepase_S28_SKS"/>
</dbReference>
<dbReference type="PANTHER" id="PTHR11010:SF38">
    <property type="entry name" value="LYSOSOMAL PRO-X CARBOXYPEPTIDASE"/>
    <property type="match status" value="1"/>
</dbReference>
<dbReference type="PANTHER" id="PTHR11010">
    <property type="entry name" value="PROTEASE S28 PRO-X CARBOXYPEPTIDASE-RELATED"/>
    <property type="match status" value="1"/>
</dbReference>
<dbReference type="Pfam" id="PF05577">
    <property type="entry name" value="Peptidase_S28"/>
    <property type="match status" value="1"/>
</dbReference>
<dbReference type="SUPFAM" id="SSF53474">
    <property type="entry name" value="alpha/beta-Hydrolases"/>
    <property type="match status" value="1"/>
</dbReference>
<accession>Q7TMR0</accession>
<accession>Q3TLW3</accession>
<accession>Q3V302</accession>
<accession>Q8BKK3</accession>
<accession>Q8R0T8</accession>
<accession>Q9D049</accession>
<evidence type="ECO:0000250" key="1"/>
<evidence type="ECO:0000255" key="2"/>
<evidence type="ECO:0000303" key="3">
    <source>
    </source>
</evidence>
<evidence type="ECO:0000305" key="4"/>
<sequence>MGCRALLLLSFLLLGAATTIPPRLKTLGSPHLSASPTPDPAVARKYSVLYFEQKVDHFGFADMRTFKQRYLVADKHWQRNGGSILFYTGNEGDIVWFCNNTGFMWDVAEELKAMLVFAEHRYYGESLPFGQDSFKDSQHLNFLTSEQALADFAELIRHLEKTIPGAQGQPVIAIGGSYGGMLAAWFRMKYPHIVVGALAASAPIWQLDGMVPCGEFMKIVTNDFRKSGPYCSESIRKSWNVIDKLSGSGSGLQSLTNILHLCSPLTSEKIPTLKGWIAETWVNLAMVNYPYACNFLQPLPAWPIKEVCQYLKNPNVSDTVLLQNIFQALSVYYNYSGQAACLNISQTTTSSLGSMGWSFQACTEMVMPFCTNGIDDMFEPFLWDLEKYSNDCFNQWGVKPRPHWMTTMYGGKNISSHSNIIFSNGELDPWSGGGVTRDITDTLVAINIHDGAHHLDLRAHNAFDPSSVLLSRLLEVKHMKKWILDFYSNIQ</sequence>
<protein>
    <recommendedName>
        <fullName>Lysosomal Pro-X carboxypeptidase</fullName>
        <ecNumber>3.4.16.2</ecNumber>
    </recommendedName>
    <alternativeName>
        <fullName>Proline carboxypeptidase</fullName>
    </alternativeName>
    <alternativeName>
        <fullName>Prolylcarboxypeptidase</fullName>
        <shortName>PRCP</shortName>
    </alternativeName>
</protein>
<gene>
    <name type="primary">Prcp</name>
</gene>
<comment type="function">
    <text evidence="1">Cleaves C-terminal amino acids linked to proline in peptides such as angiotensin II, III and des-Arg9-bradykinin. This cleavage occurs at acidic pH, but enzymatic activity is retained with some substrates at neutral pH (By similarity).</text>
</comment>
<comment type="catalytic activity">
    <reaction>
        <text>Cleavage of a -Pro-|-Xaa bond to release a C-terminal amino acid.</text>
        <dbReference type="EC" id="3.4.16.2"/>
    </reaction>
</comment>
<comment type="subunit">
    <text evidence="1">Homodimer.</text>
</comment>
<comment type="subcellular location">
    <subcellularLocation>
        <location evidence="1">Lysosome</location>
    </subcellularLocation>
</comment>
<comment type="alternative products">
    <event type="alternative splicing"/>
    <isoform>
        <id>Q7TMR0-1</id>
        <name>1</name>
        <sequence type="displayed"/>
    </isoform>
    <isoform>
        <id>Q7TMR0-2</id>
        <name>2</name>
        <sequence type="described" ref="VSP_039456"/>
    </isoform>
</comment>
<comment type="similarity">
    <text evidence="4">Belongs to the peptidase S28 family.</text>
</comment>